<organism>
    <name type="scientific">Drosophila melanogaster</name>
    <name type="common">Fruit fly</name>
    <dbReference type="NCBI Taxonomy" id="7227"/>
    <lineage>
        <taxon>Eukaryota</taxon>
        <taxon>Metazoa</taxon>
        <taxon>Ecdysozoa</taxon>
        <taxon>Arthropoda</taxon>
        <taxon>Hexapoda</taxon>
        <taxon>Insecta</taxon>
        <taxon>Pterygota</taxon>
        <taxon>Neoptera</taxon>
        <taxon>Endopterygota</taxon>
        <taxon>Diptera</taxon>
        <taxon>Brachycera</taxon>
        <taxon>Muscomorpha</taxon>
        <taxon>Ephydroidea</taxon>
        <taxon>Drosophilidae</taxon>
        <taxon>Drosophila</taxon>
        <taxon>Sophophora</taxon>
    </lineage>
</organism>
<name>SIN1_DROME</name>
<dbReference type="EMBL" id="AE013599">
    <property type="protein sequence ID" value="AAF58247.1"/>
    <property type="molecule type" value="Genomic_DNA"/>
</dbReference>
<dbReference type="EMBL" id="BT003261">
    <property type="protein sequence ID" value="AAO25018.1"/>
    <property type="molecule type" value="mRNA"/>
</dbReference>
<dbReference type="RefSeq" id="NP_610963.1">
    <property type="nucleotide sequence ID" value="NM_137119.4"/>
</dbReference>
<dbReference type="SMR" id="Q9V719"/>
<dbReference type="BioGRID" id="62354">
    <property type="interactions" value="13"/>
</dbReference>
<dbReference type="ComplexPortal" id="CPX-2269">
    <property type="entry name" value="TORC2 complex"/>
</dbReference>
<dbReference type="FunCoup" id="Q9V719">
    <property type="interactions" value="1930"/>
</dbReference>
<dbReference type="IntAct" id="Q9V719">
    <property type="interactions" value="16"/>
</dbReference>
<dbReference type="MINT" id="Q9V719"/>
<dbReference type="STRING" id="7227.FBpp0086616"/>
<dbReference type="iPTMnet" id="Q9V719"/>
<dbReference type="PaxDb" id="7227-FBpp0086616"/>
<dbReference type="DNASU" id="36604"/>
<dbReference type="EnsemblMetazoa" id="FBtr0087487">
    <property type="protein sequence ID" value="FBpp0086616"/>
    <property type="gene ID" value="FBgn0033935"/>
</dbReference>
<dbReference type="GeneID" id="36604"/>
<dbReference type="KEGG" id="dme:Dmel_CG10105"/>
<dbReference type="AGR" id="FB:FBgn0033935"/>
<dbReference type="CTD" id="36604"/>
<dbReference type="FlyBase" id="FBgn0033935">
    <property type="gene designation" value="Sin1"/>
</dbReference>
<dbReference type="VEuPathDB" id="VectorBase:FBgn0033935"/>
<dbReference type="eggNOG" id="KOG3739">
    <property type="taxonomic scope" value="Eukaryota"/>
</dbReference>
<dbReference type="GeneTree" id="ENSGT00390000000642"/>
<dbReference type="HOGENOM" id="CLU_514767_0_0_1"/>
<dbReference type="InParanoid" id="Q9V719"/>
<dbReference type="OMA" id="NAKFWPQ"/>
<dbReference type="OrthoDB" id="241990at2759"/>
<dbReference type="PhylomeDB" id="Q9V719"/>
<dbReference type="Reactome" id="R-DME-1257604">
    <property type="pathway name" value="PIP3 activates AKT signaling"/>
</dbReference>
<dbReference type="Reactome" id="R-DME-389357">
    <property type="pathway name" value="CD28 dependent PI3K/Akt signaling"/>
</dbReference>
<dbReference type="Reactome" id="R-DME-5218920">
    <property type="pathway name" value="VEGFR2 mediated vascular permeability"/>
</dbReference>
<dbReference type="Reactome" id="R-DME-9856530">
    <property type="pathway name" value="High laminar flow shear stress activates signaling by PIEZO1 and PECAM1:CDH5:KDR in endothelial cells"/>
</dbReference>
<dbReference type="BioGRID-ORCS" id="36604">
    <property type="hits" value="0 hits in 1 CRISPR screen"/>
</dbReference>
<dbReference type="GenomeRNAi" id="36604"/>
<dbReference type="PRO" id="PR:Q9V719"/>
<dbReference type="Proteomes" id="UP000000803">
    <property type="component" value="Chromosome 2R"/>
</dbReference>
<dbReference type="Bgee" id="FBgn0033935">
    <property type="expression patterns" value="Expressed in spermatocyte in testis and 47 other cell types or tissues"/>
</dbReference>
<dbReference type="GO" id="GO:0005737">
    <property type="term" value="C:cytoplasm"/>
    <property type="evidence" value="ECO:0000318"/>
    <property type="project" value="GO_Central"/>
</dbReference>
<dbReference type="GO" id="GO:0005886">
    <property type="term" value="C:plasma membrane"/>
    <property type="evidence" value="ECO:0000318"/>
    <property type="project" value="GO_Central"/>
</dbReference>
<dbReference type="GO" id="GO:0031932">
    <property type="term" value="C:TORC2 complex"/>
    <property type="evidence" value="ECO:0000316"/>
    <property type="project" value="FlyBase"/>
</dbReference>
<dbReference type="GO" id="GO:0005546">
    <property type="term" value="F:phosphatidylinositol-4,5-bisphosphate binding"/>
    <property type="evidence" value="ECO:0000318"/>
    <property type="project" value="GO_Central"/>
</dbReference>
<dbReference type="GO" id="GO:0019901">
    <property type="term" value="F:protein kinase binding"/>
    <property type="evidence" value="ECO:0000250"/>
    <property type="project" value="ParkinsonsUK-UCL"/>
</dbReference>
<dbReference type="GO" id="GO:0043539">
    <property type="term" value="F:protein serine/threonine kinase activator activity"/>
    <property type="evidence" value="ECO:0000315"/>
    <property type="project" value="FlyBase"/>
</dbReference>
<dbReference type="GO" id="GO:0006915">
    <property type="term" value="P:apoptotic process"/>
    <property type="evidence" value="ECO:0007669"/>
    <property type="project" value="UniProtKB-KW"/>
</dbReference>
<dbReference type="GO" id="GO:0032869">
    <property type="term" value="P:cellular response to insulin stimulus"/>
    <property type="evidence" value="ECO:0000315"/>
    <property type="project" value="FlyBase"/>
</dbReference>
<dbReference type="GO" id="GO:0048813">
    <property type="term" value="P:dendrite morphogenesis"/>
    <property type="evidence" value="ECO:0000315"/>
    <property type="project" value="FlyBase"/>
</dbReference>
<dbReference type="GO" id="GO:0046628">
    <property type="term" value="P:positive regulation of insulin receptor signaling pathway"/>
    <property type="evidence" value="ECO:0000315"/>
    <property type="project" value="FlyBase"/>
</dbReference>
<dbReference type="GO" id="GO:0051897">
    <property type="term" value="P:positive regulation of phosphatidylinositol 3-kinase/protein kinase B signal transduction"/>
    <property type="evidence" value="ECO:0000315"/>
    <property type="project" value="FlyBase"/>
</dbReference>
<dbReference type="GO" id="GO:0045887">
    <property type="term" value="P:positive regulation of synaptic assembly at neuromuscular junction"/>
    <property type="evidence" value="ECO:0000315"/>
    <property type="project" value="FlyBase"/>
</dbReference>
<dbReference type="GO" id="GO:0034063">
    <property type="term" value="P:stress granule assembly"/>
    <property type="evidence" value="ECO:0000315"/>
    <property type="project" value="FlyBase"/>
</dbReference>
<dbReference type="GO" id="GO:0038203">
    <property type="term" value="P:TORC2 signaling"/>
    <property type="evidence" value="ECO:0000316"/>
    <property type="project" value="FlyBase"/>
</dbReference>
<dbReference type="Gene3D" id="2.30.29.30">
    <property type="entry name" value="Pleckstrin-homology domain (PH domain)/Phosphotyrosine-binding domain (PTB)"/>
    <property type="match status" value="1"/>
</dbReference>
<dbReference type="InterPro" id="IPR031567">
    <property type="entry name" value="CRIM_dom"/>
</dbReference>
<dbReference type="InterPro" id="IPR011993">
    <property type="entry name" value="PH-like_dom_sf"/>
</dbReference>
<dbReference type="InterPro" id="IPR008828">
    <property type="entry name" value="Sin1/Avo1"/>
</dbReference>
<dbReference type="InterPro" id="IPR032679">
    <property type="entry name" value="Sin1_N"/>
</dbReference>
<dbReference type="InterPro" id="IPR031313">
    <property type="entry name" value="Sin1_PH_dom"/>
</dbReference>
<dbReference type="PANTHER" id="PTHR13335">
    <property type="entry name" value="TARGET OF RAPAMYCIN COMPLEX 2 SUBUNIT MAPKAP1"/>
    <property type="match status" value="1"/>
</dbReference>
<dbReference type="PANTHER" id="PTHR13335:SF1">
    <property type="entry name" value="TARGET OF RAPAMYCIN COMPLEX 2 SUBUNIT MAPKAP1"/>
    <property type="match status" value="1"/>
</dbReference>
<dbReference type="Pfam" id="PF16978">
    <property type="entry name" value="CRIM"/>
    <property type="match status" value="1"/>
</dbReference>
<dbReference type="Pfam" id="PF05422">
    <property type="entry name" value="SIN1"/>
    <property type="match status" value="1"/>
</dbReference>
<dbReference type="Pfam" id="PF16979">
    <property type="entry name" value="SIN1_PH"/>
    <property type="match status" value="1"/>
</dbReference>
<protein>
    <recommendedName>
        <fullName>Stress-activated map kinase-interacting protein 1</fullName>
        <shortName>SAPK-interacting protein 1</shortName>
        <shortName>dSin1</shortName>
    </recommendedName>
</protein>
<proteinExistence type="evidence at protein level"/>
<gene>
    <name type="primary">Sin1</name>
    <name type="ORF">CG10105</name>
</gene>
<comment type="function">
    <text evidence="1 4 5">Component of the target of rapamycin complex 2 (TORC2), which transduces signals from growth factors to pathways involved in proliferation, cytoskeletal organization and anabolic output (PubMed:16919458, PubMed:17043309). In response to growth factors, TORC2 phosphorylates and activates AGC protein kinase family members, such as Akt1 (PubMed:16919458, PubMed:17043309). Within the TORC2 complex, Sin1 acts as a substrate adapter which recognizes and binds AGC protein kinase family members for phosphorylation by mTor (By similarity).</text>
</comment>
<comment type="subunit">
    <text evidence="5">Component of the target of rapamycin complex 2 (TORC2).</text>
</comment>
<comment type="similarity">
    <text evidence="7">Belongs to the SIN1 family.</text>
</comment>
<sequence length="569" mass="64239">MATYSNQHWLLSHIRNSFISTDDTGMCETVMLSDDMPKHYLRKFGNSGAGGDHYHWRRAHKTPPTGGGTTPERNTRHPDAPLQEVDFICYPGLDLSDDEEDMSTHSFDIQMYPEVGAHRFRSNTAQKLEKLDIAKRRAARIKSVNYQEEVQPPESDDFFKRKELPLSKAERVKNEPKANDDDLSDEGVQSQLTEQLAKSPKQAQNRFIEFARFDGTSQVGMQTKRINVFLNMLPEPDRNYPLKICVVATAKIQEVIGFVCYRTSLQYPDVPLKSLQHYALYMTEDNDDMEDFPPLDNREPCSKFGFSQLTLAERRPLAPVTRVDYHSQLGSKSMTSVEDKTALSDAAVKALQNISLNGGTSDPGGGGGGGDSPHDNVKEYEKRLLNHNDMLEAPMHRTFRLNIIDKRFFKSDVTLGISGERIEIDQCKNAKFWPQKKPVSTPIDFVAHCEILERRHLKALLRIWLKSNSSSPSFSTGCTSAPINASVTTLNAGSGSGGIAHSPSSPGHSSGLFSSSNIRFKHYDFDTDTHTAEQIHNKLNCILEMRSSDLRREFLLQRDRKQEKRQLKL</sequence>
<feature type="chain" id="PRO_0000218772" description="Stress-activated map kinase-interacting protein 1">
    <location>
        <begin position="1"/>
        <end position="569"/>
    </location>
</feature>
<feature type="domain" description="CRIM" evidence="2">
    <location>
        <begin position="189"/>
        <end position="314"/>
    </location>
</feature>
<feature type="domain" description="SIN1-type PH" evidence="2">
    <location>
        <begin position="395"/>
        <end position="545"/>
    </location>
</feature>
<feature type="region of interest" description="Disordered" evidence="3">
    <location>
        <begin position="52"/>
        <end position="82"/>
    </location>
</feature>
<feature type="region of interest" description="Disordered" evidence="3">
    <location>
        <begin position="169"/>
        <end position="200"/>
    </location>
</feature>
<feature type="region of interest" description="Disordered" evidence="3">
    <location>
        <begin position="355"/>
        <end position="377"/>
    </location>
</feature>
<feature type="compositionally biased region" description="Basic and acidic residues" evidence="3">
    <location>
        <begin position="169"/>
        <end position="180"/>
    </location>
</feature>
<feature type="compositionally biased region" description="Polar residues" evidence="3">
    <location>
        <begin position="187"/>
        <end position="200"/>
    </location>
</feature>
<feature type="compositionally biased region" description="Gly residues" evidence="3">
    <location>
        <begin position="361"/>
        <end position="371"/>
    </location>
</feature>
<feature type="modified residue" description="Phosphoserine" evidence="6">
    <location>
        <position position="333"/>
    </location>
</feature>
<feature type="modified residue" description="Phosphoserine" evidence="6">
    <location>
        <position position="355"/>
    </location>
</feature>
<feature type="modified residue" description="Phosphoserine" evidence="6">
    <location>
        <position position="372"/>
    </location>
</feature>
<feature type="modified residue" description="Phosphoserine" evidence="6">
    <location>
        <position position="504"/>
    </location>
</feature>
<reference key="1">
    <citation type="journal article" date="2000" name="Science">
        <title>The genome sequence of Drosophila melanogaster.</title>
        <authorList>
            <person name="Adams M.D."/>
            <person name="Celniker S.E."/>
            <person name="Holt R.A."/>
            <person name="Evans C.A."/>
            <person name="Gocayne J.D."/>
            <person name="Amanatides P.G."/>
            <person name="Scherer S.E."/>
            <person name="Li P.W."/>
            <person name="Hoskins R.A."/>
            <person name="Galle R.F."/>
            <person name="George R.A."/>
            <person name="Lewis S.E."/>
            <person name="Richards S."/>
            <person name="Ashburner M."/>
            <person name="Henderson S.N."/>
            <person name="Sutton G.G."/>
            <person name="Wortman J.R."/>
            <person name="Yandell M.D."/>
            <person name="Zhang Q."/>
            <person name="Chen L.X."/>
            <person name="Brandon R.C."/>
            <person name="Rogers Y.-H.C."/>
            <person name="Blazej R.G."/>
            <person name="Champe M."/>
            <person name="Pfeiffer B.D."/>
            <person name="Wan K.H."/>
            <person name="Doyle C."/>
            <person name="Baxter E.G."/>
            <person name="Helt G."/>
            <person name="Nelson C.R."/>
            <person name="Miklos G.L.G."/>
            <person name="Abril J.F."/>
            <person name="Agbayani A."/>
            <person name="An H.-J."/>
            <person name="Andrews-Pfannkoch C."/>
            <person name="Baldwin D."/>
            <person name="Ballew R.M."/>
            <person name="Basu A."/>
            <person name="Baxendale J."/>
            <person name="Bayraktaroglu L."/>
            <person name="Beasley E.M."/>
            <person name="Beeson K.Y."/>
            <person name="Benos P.V."/>
            <person name="Berman B.P."/>
            <person name="Bhandari D."/>
            <person name="Bolshakov S."/>
            <person name="Borkova D."/>
            <person name="Botchan M.R."/>
            <person name="Bouck J."/>
            <person name="Brokstein P."/>
            <person name="Brottier P."/>
            <person name="Burtis K.C."/>
            <person name="Busam D.A."/>
            <person name="Butler H."/>
            <person name="Cadieu E."/>
            <person name="Center A."/>
            <person name="Chandra I."/>
            <person name="Cherry J.M."/>
            <person name="Cawley S."/>
            <person name="Dahlke C."/>
            <person name="Davenport L.B."/>
            <person name="Davies P."/>
            <person name="de Pablos B."/>
            <person name="Delcher A."/>
            <person name="Deng Z."/>
            <person name="Mays A.D."/>
            <person name="Dew I."/>
            <person name="Dietz S.M."/>
            <person name="Dodson K."/>
            <person name="Doup L.E."/>
            <person name="Downes M."/>
            <person name="Dugan-Rocha S."/>
            <person name="Dunkov B.C."/>
            <person name="Dunn P."/>
            <person name="Durbin K.J."/>
            <person name="Evangelista C.C."/>
            <person name="Ferraz C."/>
            <person name="Ferriera S."/>
            <person name="Fleischmann W."/>
            <person name="Fosler C."/>
            <person name="Gabrielian A.E."/>
            <person name="Garg N.S."/>
            <person name="Gelbart W.M."/>
            <person name="Glasser K."/>
            <person name="Glodek A."/>
            <person name="Gong F."/>
            <person name="Gorrell J.H."/>
            <person name="Gu Z."/>
            <person name="Guan P."/>
            <person name="Harris M."/>
            <person name="Harris N.L."/>
            <person name="Harvey D.A."/>
            <person name="Heiman T.J."/>
            <person name="Hernandez J.R."/>
            <person name="Houck J."/>
            <person name="Hostin D."/>
            <person name="Houston K.A."/>
            <person name="Howland T.J."/>
            <person name="Wei M.-H."/>
            <person name="Ibegwam C."/>
            <person name="Jalali M."/>
            <person name="Kalush F."/>
            <person name="Karpen G.H."/>
            <person name="Ke Z."/>
            <person name="Kennison J.A."/>
            <person name="Ketchum K.A."/>
            <person name="Kimmel B.E."/>
            <person name="Kodira C.D."/>
            <person name="Kraft C.L."/>
            <person name="Kravitz S."/>
            <person name="Kulp D."/>
            <person name="Lai Z."/>
            <person name="Lasko P."/>
            <person name="Lei Y."/>
            <person name="Levitsky A.A."/>
            <person name="Li J.H."/>
            <person name="Li Z."/>
            <person name="Liang Y."/>
            <person name="Lin X."/>
            <person name="Liu X."/>
            <person name="Mattei B."/>
            <person name="McIntosh T.C."/>
            <person name="McLeod M.P."/>
            <person name="McPherson D."/>
            <person name="Merkulov G."/>
            <person name="Milshina N.V."/>
            <person name="Mobarry C."/>
            <person name="Morris J."/>
            <person name="Moshrefi A."/>
            <person name="Mount S.M."/>
            <person name="Moy M."/>
            <person name="Murphy B."/>
            <person name="Murphy L."/>
            <person name="Muzny D.M."/>
            <person name="Nelson D.L."/>
            <person name="Nelson D.R."/>
            <person name="Nelson K.A."/>
            <person name="Nixon K."/>
            <person name="Nusskern D.R."/>
            <person name="Pacleb J.M."/>
            <person name="Palazzolo M."/>
            <person name="Pittman G.S."/>
            <person name="Pan S."/>
            <person name="Pollard J."/>
            <person name="Puri V."/>
            <person name="Reese M.G."/>
            <person name="Reinert K."/>
            <person name="Remington K."/>
            <person name="Saunders R.D.C."/>
            <person name="Scheeler F."/>
            <person name="Shen H."/>
            <person name="Shue B.C."/>
            <person name="Siden-Kiamos I."/>
            <person name="Simpson M."/>
            <person name="Skupski M.P."/>
            <person name="Smith T.J."/>
            <person name="Spier E."/>
            <person name="Spradling A.C."/>
            <person name="Stapleton M."/>
            <person name="Strong R."/>
            <person name="Sun E."/>
            <person name="Svirskas R."/>
            <person name="Tector C."/>
            <person name="Turner R."/>
            <person name="Venter E."/>
            <person name="Wang A.H."/>
            <person name="Wang X."/>
            <person name="Wang Z.-Y."/>
            <person name="Wassarman D.A."/>
            <person name="Weinstock G.M."/>
            <person name="Weissenbach J."/>
            <person name="Williams S.M."/>
            <person name="Woodage T."/>
            <person name="Worley K.C."/>
            <person name="Wu D."/>
            <person name="Yang S."/>
            <person name="Yao Q.A."/>
            <person name="Ye J."/>
            <person name="Yeh R.-F."/>
            <person name="Zaveri J.S."/>
            <person name="Zhan M."/>
            <person name="Zhang G."/>
            <person name="Zhao Q."/>
            <person name="Zheng L."/>
            <person name="Zheng X.H."/>
            <person name="Zhong F.N."/>
            <person name="Zhong W."/>
            <person name="Zhou X."/>
            <person name="Zhu S.C."/>
            <person name="Zhu X."/>
            <person name="Smith H.O."/>
            <person name="Gibbs R.A."/>
            <person name="Myers E.W."/>
            <person name="Rubin G.M."/>
            <person name="Venter J.C."/>
        </authorList>
    </citation>
    <scope>NUCLEOTIDE SEQUENCE [LARGE SCALE GENOMIC DNA]</scope>
    <source>
        <strain>Berkeley</strain>
    </source>
</reference>
<reference key="2">
    <citation type="journal article" date="2002" name="Genome Biol.">
        <title>Annotation of the Drosophila melanogaster euchromatic genome: a systematic review.</title>
        <authorList>
            <person name="Misra S."/>
            <person name="Crosby M.A."/>
            <person name="Mungall C.J."/>
            <person name="Matthews B.B."/>
            <person name="Campbell K.S."/>
            <person name="Hradecky P."/>
            <person name="Huang Y."/>
            <person name="Kaminker J.S."/>
            <person name="Millburn G.H."/>
            <person name="Prochnik S.E."/>
            <person name="Smith C.D."/>
            <person name="Tupy J.L."/>
            <person name="Whitfield E.J."/>
            <person name="Bayraktaroglu L."/>
            <person name="Berman B.P."/>
            <person name="Bettencourt B.R."/>
            <person name="Celniker S.E."/>
            <person name="de Grey A.D.N.J."/>
            <person name="Drysdale R.A."/>
            <person name="Harris N.L."/>
            <person name="Richter J."/>
            <person name="Russo S."/>
            <person name="Schroeder A.J."/>
            <person name="Shu S.Q."/>
            <person name="Stapleton M."/>
            <person name="Yamada C."/>
            <person name="Ashburner M."/>
            <person name="Gelbart W.M."/>
            <person name="Rubin G.M."/>
            <person name="Lewis S.E."/>
        </authorList>
    </citation>
    <scope>GENOME REANNOTATION</scope>
    <source>
        <strain>Berkeley</strain>
    </source>
</reference>
<reference key="3">
    <citation type="journal article" date="2002" name="Genome Biol.">
        <title>A Drosophila full-length cDNA resource.</title>
        <authorList>
            <person name="Stapleton M."/>
            <person name="Carlson J.W."/>
            <person name="Brokstein P."/>
            <person name="Yu C."/>
            <person name="Champe M."/>
            <person name="George R.A."/>
            <person name="Guarin H."/>
            <person name="Kronmiller B."/>
            <person name="Pacleb J.M."/>
            <person name="Park S."/>
            <person name="Wan K.H."/>
            <person name="Rubin G.M."/>
            <person name="Celniker S.E."/>
        </authorList>
    </citation>
    <scope>NUCLEOTIDE SEQUENCE [LARGE SCALE MRNA]</scope>
    <source>
        <strain>Berkeley</strain>
        <tissue>Embryo</tissue>
    </source>
</reference>
<reference key="4">
    <citation type="journal article" date="2006" name="Curr. Biol.">
        <title>mSin1 is necessary for Akt/PKB phosphorylation, and its isoforms define three distinct mTORC2s.</title>
        <authorList>
            <person name="Frias M.A."/>
            <person name="Thoreen C.C."/>
            <person name="Jaffe J.D."/>
            <person name="Schroder W."/>
            <person name="Sculley T."/>
            <person name="Carr S.A."/>
            <person name="Sabatini D.M."/>
        </authorList>
    </citation>
    <scope>FUNCTION</scope>
</reference>
<reference key="5">
    <citation type="journal article" date="2006" name="Genes Dev.">
        <title>Identification of Sin1 as an essential TORC2 component required for complex formation and kinase activity.</title>
        <authorList>
            <person name="Yang Q."/>
            <person name="Inoki K."/>
            <person name="Ikenoue T."/>
            <person name="Guan K.-L."/>
        </authorList>
    </citation>
    <scope>FUNCTION</scope>
</reference>
<reference key="6">
    <citation type="journal article" date="2008" name="J. Proteome Res.">
        <title>Phosphoproteome analysis of Drosophila melanogaster embryos.</title>
        <authorList>
            <person name="Zhai B."/>
            <person name="Villen J."/>
            <person name="Beausoleil S.A."/>
            <person name="Mintseris J."/>
            <person name="Gygi S.P."/>
        </authorList>
    </citation>
    <scope>PHOSPHORYLATION [LARGE SCALE ANALYSIS] AT SER-333; SER-355; SER-372 AND SER-504</scope>
    <scope>IDENTIFICATION BY MASS SPECTROMETRY</scope>
    <source>
        <tissue>Embryo</tissue>
    </source>
</reference>
<accession>Q9V719</accession>
<accession>Q53YG4</accession>
<keyword id="KW-0053">Apoptosis</keyword>
<keyword id="KW-0597">Phosphoprotein</keyword>
<keyword id="KW-1185">Reference proteome</keyword>
<evidence type="ECO:0000250" key="1">
    <source>
        <dbReference type="UniProtKB" id="Q9BPZ7"/>
    </source>
</evidence>
<evidence type="ECO:0000255" key="2"/>
<evidence type="ECO:0000256" key="3">
    <source>
        <dbReference type="SAM" id="MobiDB-lite"/>
    </source>
</evidence>
<evidence type="ECO:0000269" key="4">
    <source>
    </source>
</evidence>
<evidence type="ECO:0000269" key="5">
    <source>
    </source>
</evidence>
<evidence type="ECO:0000269" key="6">
    <source>
    </source>
</evidence>
<evidence type="ECO:0000305" key="7"/>